<dbReference type="EMBL" id="CR354402">
    <property type="protein sequence ID" value="CAQ15446.1"/>
    <property type="molecule type" value="Genomic_DNA"/>
</dbReference>
<dbReference type="EMBL" id="BC127400">
    <property type="protein sequence ID" value="AAI27401.1"/>
    <property type="molecule type" value="mRNA"/>
</dbReference>
<dbReference type="RefSeq" id="NP_001071234.1">
    <property type="nucleotide sequence ID" value="NM_001077766.1"/>
</dbReference>
<dbReference type="RefSeq" id="XP_021333991.1">
    <property type="nucleotide sequence ID" value="XM_021478316.2"/>
</dbReference>
<dbReference type="SMR" id="A0JPF5"/>
<dbReference type="STRING" id="7955.ENSDARP00000078566"/>
<dbReference type="PaxDb" id="7955-ENSDARP00000078566"/>
<dbReference type="Ensembl" id="ENSDART00000084131">
    <property type="protein sequence ID" value="ENSDARP00000078566"/>
    <property type="gene ID" value="ENSDARG00000060029"/>
</dbReference>
<dbReference type="GeneID" id="777718"/>
<dbReference type="KEGG" id="dre:777718"/>
<dbReference type="AGR" id="ZFIN:ZDB-GENE-061110-76"/>
<dbReference type="CTD" id="64760"/>
<dbReference type="ZFIN" id="ZDB-GENE-061110-76">
    <property type="gene designation" value="fhip2b"/>
</dbReference>
<dbReference type="eggNOG" id="KOG3695">
    <property type="taxonomic scope" value="Eukaryota"/>
</dbReference>
<dbReference type="InParanoid" id="A0JPF5"/>
<dbReference type="OMA" id="CDHLIME"/>
<dbReference type="OrthoDB" id="5350595at2759"/>
<dbReference type="PhylomeDB" id="A0JPF5"/>
<dbReference type="TreeFam" id="TF313941"/>
<dbReference type="PRO" id="PR:A0JPF5"/>
<dbReference type="Proteomes" id="UP000000437">
    <property type="component" value="Alternate scaffold 8"/>
</dbReference>
<dbReference type="Proteomes" id="UP000000437">
    <property type="component" value="Chromosome 8"/>
</dbReference>
<dbReference type="Bgee" id="ENSDARG00000060029">
    <property type="expression patterns" value="Expressed in muscle tissue and 20 other cell types or tissues"/>
</dbReference>
<dbReference type="InterPro" id="IPR019384">
    <property type="entry name" value="FHIP"/>
</dbReference>
<dbReference type="InterPro" id="IPR045669">
    <property type="entry name" value="FHIP_C"/>
</dbReference>
<dbReference type="InterPro" id="IPR045668">
    <property type="entry name" value="FHIP_KELAA_motif"/>
</dbReference>
<dbReference type="PANTHER" id="PTHR21705:SF9">
    <property type="entry name" value="FHF COMPLEX SUBUNIT HOOK-INTERACTING PROTEIN 2B"/>
    <property type="match status" value="1"/>
</dbReference>
<dbReference type="PANTHER" id="PTHR21705">
    <property type="entry name" value="RAI16 PROTEIN-RELATED"/>
    <property type="match status" value="1"/>
</dbReference>
<dbReference type="Pfam" id="PF19314">
    <property type="entry name" value="DUF5917"/>
    <property type="match status" value="1"/>
</dbReference>
<dbReference type="Pfam" id="PF19311">
    <property type="entry name" value="KELAA"/>
    <property type="match status" value="1"/>
</dbReference>
<dbReference type="Pfam" id="PF10257">
    <property type="entry name" value="RAI16-like"/>
    <property type="match status" value="1"/>
</dbReference>
<gene>
    <name type="primary">fhip2b</name>
    <name type="synonym">fam160b2</name>
    <name type="synonym">rai16</name>
    <name type="synonym">rai16l</name>
    <name type="ORF">si:ch211-119d14.1</name>
    <name type="ORF">zgc:153945</name>
</gene>
<sequence length="735" mass="83627">MDMFNKVTAFLQQALETREPSINLLESFVDHWKAITNYYIETTDESRAVKNTDIPWRLRQMLDILVYEEKQQGEEAGPCMEYLLQHKILETLCTLGKAQYPPGMSQQVMVFFSKVLSHIQKPVLHLINVYRPVQKLINLCGLPHSQTEKEESQFLFAVCTQVNKDPYVLNYILEIKNDSLKRSSSTSDEAAEKDCSGSSSPERASSPSSSSSACSLLSRSGAHPVSSPQEATGMIPVLLHLEKSEKRRVAHRSLESLLLLVSSTQEDTGHLLAERTPLCDLLAQRLTELYLLIPSTIDPADIHSFSVVQWRTRFTQDSTAESQSFPGSENVYRFFCFLDLCNELIKQAPKVLGVKMARALHSQWLKGVIQPHLLQMSEVGILVHTTLLSCSVRHIHSPALLEELVQFMLGSDTDSETRQHLHTHLLRYRLIEHCNHISDEISITTLRLFEELLQKPNRRILSNLVLRNLENRSYKLPGTGASDERLRVESDLLDESEELEEDPFFPDMYDDSGDSNHEPLLSLPNVRERLNPNLHTQVVDTVNSFLCLVPQEAKTSHLVQGAGYDTYVHDAHKVFKECTALVRDWKWPDSAKATVNNPSTDFYEGHFLHILFDRIARILEQPYELNLQVTSVLSRLAVFPHPNLHEYLLDPYISLSPGARSLFSTLVRVIGDLMQRIQNITNVTDRLVVIRRQLMGLDEESMVDHMTLLKGVIVLEEFCKELAAVAFVKLPTEEQ</sequence>
<comment type="similarity">
    <text evidence="2">Belongs to the FHIP family.</text>
</comment>
<keyword id="KW-1185">Reference proteome</keyword>
<reference key="1">
    <citation type="journal article" date="2013" name="Nature">
        <title>The zebrafish reference genome sequence and its relationship to the human genome.</title>
        <authorList>
            <person name="Howe K."/>
            <person name="Clark M.D."/>
            <person name="Torroja C.F."/>
            <person name="Torrance J."/>
            <person name="Berthelot C."/>
            <person name="Muffato M."/>
            <person name="Collins J.E."/>
            <person name="Humphray S."/>
            <person name="McLaren K."/>
            <person name="Matthews L."/>
            <person name="McLaren S."/>
            <person name="Sealy I."/>
            <person name="Caccamo M."/>
            <person name="Churcher C."/>
            <person name="Scott C."/>
            <person name="Barrett J.C."/>
            <person name="Koch R."/>
            <person name="Rauch G.J."/>
            <person name="White S."/>
            <person name="Chow W."/>
            <person name="Kilian B."/>
            <person name="Quintais L.T."/>
            <person name="Guerra-Assuncao J.A."/>
            <person name="Zhou Y."/>
            <person name="Gu Y."/>
            <person name="Yen J."/>
            <person name="Vogel J.H."/>
            <person name="Eyre T."/>
            <person name="Redmond S."/>
            <person name="Banerjee R."/>
            <person name="Chi J."/>
            <person name="Fu B."/>
            <person name="Langley E."/>
            <person name="Maguire S.F."/>
            <person name="Laird G.K."/>
            <person name="Lloyd D."/>
            <person name="Kenyon E."/>
            <person name="Donaldson S."/>
            <person name="Sehra H."/>
            <person name="Almeida-King J."/>
            <person name="Loveland J."/>
            <person name="Trevanion S."/>
            <person name="Jones M."/>
            <person name="Quail M."/>
            <person name="Willey D."/>
            <person name="Hunt A."/>
            <person name="Burton J."/>
            <person name="Sims S."/>
            <person name="McLay K."/>
            <person name="Plumb B."/>
            <person name="Davis J."/>
            <person name="Clee C."/>
            <person name="Oliver K."/>
            <person name="Clark R."/>
            <person name="Riddle C."/>
            <person name="Elliot D."/>
            <person name="Threadgold G."/>
            <person name="Harden G."/>
            <person name="Ware D."/>
            <person name="Begum S."/>
            <person name="Mortimore B."/>
            <person name="Kerry G."/>
            <person name="Heath P."/>
            <person name="Phillimore B."/>
            <person name="Tracey A."/>
            <person name="Corby N."/>
            <person name="Dunn M."/>
            <person name="Johnson C."/>
            <person name="Wood J."/>
            <person name="Clark S."/>
            <person name="Pelan S."/>
            <person name="Griffiths G."/>
            <person name="Smith M."/>
            <person name="Glithero R."/>
            <person name="Howden P."/>
            <person name="Barker N."/>
            <person name="Lloyd C."/>
            <person name="Stevens C."/>
            <person name="Harley J."/>
            <person name="Holt K."/>
            <person name="Panagiotidis G."/>
            <person name="Lovell J."/>
            <person name="Beasley H."/>
            <person name="Henderson C."/>
            <person name="Gordon D."/>
            <person name="Auger K."/>
            <person name="Wright D."/>
            <person name="Collins J."/>
            <person name="Raisen C."/>
            <person name="Dyer L."/>
            <person name="Leung K."/>
            <person name="Robertson L."/>
            <person name="Ambridge K."/>
            <person name="Leongamornlert D."/>
            <person name="McGuire S."/>
            <person name="Gilderthorp R."/>
            <person name="Griffiths C."/>
            <person name="Manthravadi D."/>
            <person name="Nichol S."/>
            <person name="Barker G."/>
            <person name="Whitehead S."/>
            <person name="Kay M."/>
            <person name="Brown J."/>
            <person name="Murnane C."/>
            <person name="Gray E."/>
            <person name="Humphries M."/>
            <person name="Sycamore N."/>
            <person name="Barker D."/>
            <person name="Saunders D."/>
            <person name="Wallis J."/>
            <person name="Babbage A."/>
            <person name="Hammond S."/>
            <person name="Mashreghi-Mohammadi M."/>
            <person name="Barr L."/>
            <person name="Martin S."/>
            <person name="Wray P."/>
            <person name="Ellington A."/>
            <person name="Matthews N."/>
            <person name="Ellwood M."/>
            <person name="Woodmansey R."/>
            <person name="Clark G."/>
            <person name="Cooper J."/>
            <person name="Tromans A."/>
            <person name="Grafham D."/>
            <person name="Skuce C."/>
            <person name="Pandian R."/>
            <person name="Andrews R."/>
            <person name="Harrison E."/>
            <person name="Kimberley A."/>
            <person name="Garnett J."/>
            <person name="Fosker N."/>
            <person name="Hall R."/>
            <person name="Garner P."/>
            <person name="Kelly D."/>
            <person name="Bird C."/>
            <person name="Palmer S."/>
            <person name="Gehring I."/>
            <person name="Berger A."/>
            <person name="Dooley C.M."/>
            <person name="Ersan-Urun Z."/>
            <person name="Eser C."/>
            <person name="Geiger H."/>
            <person name="Geisler M."/>
            <person name="Karotki L."/>
            <person name="Kirn A."/>
            <person name="Konantz J."/>
            <person name="Konantz M."/>
            <person name="Oberlander M."/>
            <person name="Rudolph-Geiger S."/>
            <person name="Teucke M."/>
            <person name="Lanz C."/>
            <person name="Raddatz G."/>
            <person name="Osoegawa K."/>
            <person name="Zhu B."/>
            <person name="Rapp A."/>
            <person name="Widaa S."/>
            <person name="Langford C."/>
            <person name="Yang F."/>
            <person name="Schuster S.C."/>
            <person name="Carter N.P."/>
            <person name="Harrow J."/>
            <person name="Ning Z."/>
            <person name="Herrero J."/>
            <person name="Searle S.M."/>
            <person name="Enright A."/>
            <person name="Geisler R."/>
            <person name="Plasterk R.H."/>
            <person name="Lee C."/>
            <person name="Westerfield M."/>
            <person name="de Jong P.J."/>
            <person name="Zon L.I."/>
            <person name="Postlethwait J.H."/>
            <person name="Nusslein-Volhard C."/>
            <person name="Hubbard T.J."/>
            <person name="Roest Crollius H."/>
            <person name="Rogers J."/>
            <person name="Stemple D.L."/>
        </authorList>
    </citation>
    <scope>NUCLEOTIDE SEQUENCE [LARGE SCALE GENOMIC DNA]</scope>
    <source>
        <strain>Tuebingen</strain>
    </source>
</reference>
<reference key="2">
    <citation type="submission" date="2006-11" db="EMBL/GenBank/DDBJ databases">
        <authorList>
            <consortium name="NIH - Zebrafish Gene Collection (ZGC) project"/>
        </authorList>
    </citation>
    <scope>NUCLEOTIDE SEQUENCE [LARGE SCALE MRNA]</scope>
</reference>
<feature type="chain" id="PRO_0000284650" description="FHF complex subunit HOOK-interacting protein 2B">
    <location>
        <begin position="1"/>
        <end position="735"/>
    </location>
</feature>
<feature type="region of interest" description="Disordered" evidence="1">
    <location>
        <begin position="183"/>
        <end position="229"/>
    </location>
</feature>
<feature type="compositionally biased region" description="Low complexity" evidence="1">
    <location>
        <begin position="196"/>
        <end position="221"/>
    </location>
</feature>
<evidence type="ECO:0000256" key="1">
    <source>
        <dbReference type="SAM" id="MobiDB-lite"/>
    </source>
</evidence>
<evidence type="ECO:0000305" key="2"/>
<organism>
    <name type="scientific">Danio rerio</name>
    <name type="common">Zebrafish</name>
    <name type="synonym">Brachydanio rerio</name>
    <dbReference type="NCBI Taxonomy" id="7955"/>
    <lineage>
        <taxon>Eukaryota</taxon>
        <taxon>Metazoa</taxon>
        <taxon>Chordata</taxon>
        <taxon>Craniata</taxon>
        <taxon>Vertebrata</taxon>
        <taxon>Euteleostomi</taxon>
        <taxon>Actinopterygii</taxon>
        <taxon>Neopterygii</taxon>
        <taxon>Teleostei</taxon>
        <taxon>Ostariophysi</taxon>
        <taxon>Cypriniformes</taxon>
        <taxon>Danionidae</taxon>
        <taxon>Danioninae</taxon>
        <taxon>Danio</taxon>
    </lineage>
</organism>
<name>FHI2B_DANRE</name>
<accession>A0JPF5</accession>
<accession>B0UX70</accession>
<proteinExistence type="evidence at transcript level"/>
<protein>
    <recommendedName>
        <fullName>FHF complex subunit HOOK-interacting protein 2B</fullName>
        <shortName>FHIP2B</shortName>
    </recommendedName>
    <alternativeName>
        <fullName>RAI16-like protein</fullName>
    </alternativeName>
    <alternativeName>
        <fullName>Retinoic acid-induced protein 16</fullName>
    </alternativeName>
</protein>